<name>PROA_CERS1</name>
<accession>A3PQJ2</accession>
<dbReference type="EC" id="1.2.1.41" evidence="1"/>
<dbReference type="EMBL" id="CP000578">
    <property type="protein sequence ID" value="ABN78608.1"/>
    <property type="molecule type" value="Genomic_DNA"/>
</dbReference>
<dbReference type="RefSeq" id="WP_011842417.1">
    <property type="nucleotide sequence ID" value="NC_009050.1"/>
</dbReference>
<dbReference type="SMR" id="A3PQJ2"/>
<dbReference type="KEGG" id="rsh:Rsph17029_3516"/>
<dbReference type="HOGENOM" id="CLU_030231_0_0_5"/>
<dbReference type="UniPathway" id="UPA00098">
    <property type="reaction ID" value="UER00360"/>
</dbReference>
<dbReference type="GO" id="GO:0005737">
    <property type="term" value="C:cytoplasm"/>
    <property type="evidence" value="ECO:0007669"/>
    <property type="project" value="UniProtKB-SubCell"/>
</dbReference>
<dbReference type="GO" id="GO:0004350">
    <property type="term" value="F:glutamate-5-semialdehyde dehydrogenase activity"/>
    <property type="evidence" value="ECO:0007669"/>
    <property type="project" value="UniProtKB-UniRule"/>
</dbReference>
<dbReference type="GO" id="GO:0050661">
    <property type="term" value="F:NADP binding"/>
    <property type="evidence" value="ECO:0007669"/>
    <property type="project" value="InterPro"/>
</dbReference>
<dbReference type="GO" id="GO:0055129">
    <property type="term" value="P:L-proline biosynthetic process"/>
    <property type="evidence" value="ECO:0007669"/>
    <property type="project" value="UniProtKB-UniRule"/>
</dbReference>
<dbReference type="CDD" id="cd07079">
    <property type="entry name" value="ALDH_F18-19_ProA-GPR"/>
    <property type="match status" value="1"/>
</dbReference>
<dbReference type="Gene3D" id="3.40.605.10">
    <property type="entry name" value="Aldehyde Dehydrogenase, Chain A, domain 1"/>
    <property type="match status" value="1"/>
</dbReference>
<dbReference type="Gene3D" id="3.40.309.10">
    <property type="entry name" value="Aldehyde Dehydrogenase, Chain A, domain 2"/>
    <property type="match status" value="1"/>
</dbReference>
<dbReference type="HAMAP" id="MF_00412">
    <property type="entry name" value="ProA"/>
    <property type="match status" value="1"/>
</dbReference>
<dbReference type="InterPro" id="IPR016161">
    <property type="entry name" value="Ald_DH/histidinol_DH"/>
</dbReference>
<dbReference type="InterPro" id="IPR016163">
    <property type="entry name" value="Ald_DH_C"/>
</dbReference>
<dbReference type="InterPro" id="IPR016162">
    <property type="entry name" value="Ald_DH_N"/>
</dbReference>
<dbReference type="InterPro" id="IPR015590">
    <property type="entry name" value="Aldehyde_DH_dom"/>
</dbReference>
<dbReference type="InterPro" id="IPR020593">
    <property type="entry name" value="G-glutamylP_reductase_CS"/>
</dbReference>
<dbReference type="InterPro" id="IPR012134">
    <property type="entry name" value="Glu-5-SA_DH"/>
</dbReference>
<dbReference type="InterPro" id="IPR000965">
    <property type="entry name" value="GPR_dom"/>
</dbReference>
<dbReference type="NCBIfam" id="NF001221">
    <property type="entry name" value="PRK00197.1"/>
    <property type="match status" value="1"/>
</dbReference>
<dbReference type="NCBIfam" id="TIGR00407">
    <property type="entry name" value="proA"/>
    <property type="match status" value="1"/>
</dbReference>
<dbReference type="PANTHER" id="PTHR11063:SF8">
    <property type="entry name" value="DELTA-1-PYRROLINE-5-CARBOXYLATE SYNTHASE"/>
    <property type="match status" value="1"/>
</dbReference>
<dbReference type="PANTHER" id="PTHR11063">
    <property type="entry name" value="GLUTAMATE SEMIALDEHYDE DEHYDROGENASE"/>
    <property type="match status" value="1"/>
</dbReference>
<dbReference type="Pfam" id="PF00171">
    <property type="entry name" value="Aldedh"/>
    <property type="match status" value="1"/>
</dbReference>
<dbReference type="PIRSF" id="PIRSF000151">
    <property type="entry name" value="GPR"/>
    <property type="match status" value="1"/>
</dbReference>
<dbReference type="SUPFAM" id="SSF53720">
    <property type="entry name" value="ALDH-like"/>
    <property type="match status" value="1"/>
</dbReference>
<dbReference type="PROSITE" id="PS01223">
    <property type="entry name" value="PROA"/>
    <property type="match status" value="1"/>
</dbReference>
<organism>
    <name type="scientific">Cereibacter sphaeroides (strain ATCC 17029 / ATH 2.4.9)</name>
    <name type="common">Rhodobacter sphaeroides</name>
    <dbReference type="NCBI Taxonomy" id="349101"/>
    <lineage>
        <taxon>Bacteria</taxon>
        <taxon>Pseudomonadati</taxon>
        <taxon>Pseudomonadota</taxon>
        <taxon>Alphaproteobacteria</taxon>
        <taxon>Rhodobacterales</taxon>
        <taxon>Paracoccaceae</taxon>
        <taxon>Cereibacter</taxon>
    </lineage>
</organism>
<comment type="function">
    <text evidence="1">Catalyzes the NADPH-dependent reduction of L-glutamate 5-phosphate into L-glutamate 5-semialdehyde and phosphate. The product spontaneously undergoes cyclization to form 1-pyrroline-5-carboxylate.</text>
</comment>
<comment type="catalytic activity">
    <reaction evidence="1">
        <text>L-glutamate 5-semialdehyde + phosphate + NADP(+) = L-glutamyl 5-phosphate + NADPH + H(+)</text>
        <dbReference type="Rhea" id="RHEA:19541"/>
        <dbReference type="ChEBI" id="CHEBI:15378"/>
        <dbReference type="ChEBI" id="CHEBI:43474"/>
        <dbReference type="ChEBI" id="CHEBI:57783"/>
        <dbReference type="ChEBI" id="CHEBI:58066"/>
        <dbReference type="ChEBI" id="CHEBI:58274"/>
        <dbReference type="ChEBI" id="CHEBI:58349"/>
        <dbReference type="EC" id="1.2.1.41"/>
    </reaction>
</comment>
<comment type="pathway">
    <text evidence="1">Amino-acid biosynthesis; L-proline biosynthesis; L-glutamate 5-semialdehyde from L-glutamate: step 2/2.</text>
</comment>
<comment type="subcellular location">
    <subcellularLocation>
        <location evidence="1">Cytoplasm</location>
    </subcellularLocation>
</comment>
<comment type="similarity">
    <text evidence="1">Belongs to the gamma-glutamyl phosphate reductase family.</text>
</comment>
<reference key="1">
    <citation type="submission" date="2007-02" db="EMBL/GenBank/DDBJ databases">
        <title>Complete sequence of chromosome 2 of Rhodobacter sphaeroides ATCC 17029.</title>
        <authorList>
            <person name="Copeland A."/>
            <person name="Lucas S."/>
            <person name="Lapidus A."/>
            <person name="Barry K."/>
            <person name="Detter J.C."/>
            <person name="Glavina del Rio T."/>
            <person name="Hammon N."/>
            <person name="Israni S."/>
            <person name="Dalin E."/>
            <person name="Tice H."/>
            <person name="Pitluck S."/>
            <person name="Kiss H."/>
            <person name="Brettin T."/>
            <person name="Bruce D."/>
            <person name="Han C."/>
            <person name="Tapia R."/>
            <person name="Gilna P."/>
            <person name="Schmutz J."/>
            <person name="Larimer F."/>
            <person name="Land M."/>
            <person name="Hauser L."/>
            <person name="Kyrpides N."/>
            <person name="Mikhailova N."/>
            <person name="Richardson P."/>
            <person name="Mackenzie C."/>
            <person name="Choudhary M."/>
            <person name="Donohue T.J."/>
            <person name="Kaplan S."/>
        </authorList>
    </citation>
    <scope>NUCLEOTIDE SEQUENCE [LARGE SCALE GENOMIC DNA]</scope>
    <source>
        <strain>ATCC 17029 / ATH 2.4.9</strain>
    </source>
</reference>
<protein>
    <recommendedName>
        <fullName evidence="1">Gamma-glutamyl phosphate reductase</fullName>
        <shortName evidence="1">GPR</shortName>
        <ecNumber evidence="1">1.2.1.41</ecNumber>
    </recommendedName>
    <alternativeName>
        <fullName evidence="1">Glutamate-5-semialdehyde dehydrogenase</fullName>
    </alternativeName>
    <alternativeName>
        <fullName evidence="1">Glutamyl-gamma-semialdehyde dehydrogenase</fullName>
        <shortName evidence="1">GSA dehydrogenase</shortName>
    </alternativeName>
</protein>
<evidence type="ECO:0000255" key="1">
    <source>
        <dbReference type="HAMAP-Rule" id="MF_00412"/>
    </source>
</evidence>
<proteinExistence type="inferred from homology"/>
<gene>
    <name evidence="1" type="primary">proA</name>
    <name type="ordered locus">Rsph17029_3516</name>
</gene>
<keyword id="KW-0028">Amino-acid biosynthesis</keyword>
<keyword id="KW-0963">Cytoplasm</keyword>
<keyword id="KW-0521">NADP</keyword>
<keyword id="KW-0560">Oxidoreductase</keyword>
<keyword id="KW-0641">Proline biosynthesis</keyword>
<feature type="chain" id="PRO_1000049991" description="Gamma-glutamyl phosphate reductase">
    <location>
        <begin position="1"/>
        <end position="420"/>
    </location>
</feature>
<sequence>MDGTDVTMLMREIGVRARAAAAELAFAEPSRKEEALNAAAEAMLARSDEILEANGRDLAFGAEKGLTPAMMDRLKLDAARIDGIVEGLRAVAGQPDPVGQVIAEWDRPSGLHIRRVRTPLGVVGVIYESRPNVTADAGALCLKSGNAVILRGGSESFHSSGAIHAALQDGLRQAGLPVDAIQRVPTRDRAAVAEMLRMVEHIDVIVPRGGKGLVGLVQAEARVPVFAHLEGICHVYADGDADLEKARRVVLNAKTRRTGICGSAECLLIDRAFLAKHGPVLIEDLLKAGVEVRAEGELAQVPGTVPAQPEDFGREFLDMIIAAKVVDGVDEAIAHIRRYGSSHTESILTENDATAERFFRRLDSAILMRNASTQFADGGEFGMGAEIGIATGKMHARGPVGAEQLTSFKYLVTGDGTIRA</sequence>